<proteinExistence type="inferred from homology"/>
<feature type="chain" id="PRO_0000336402" description="Thiamine-phosphate synthase">
    <location>
        <begin position="1"/>
        <end position="224"/>
    </location>
</feature>
<feature type="binding site" evidence="1">
    <location>
        <begin position="41"/>
        <end position="45"/>
    </location>
    <ligand>
        <name>4-amino-2-methyl-5-(diphosphooxymethyl)pyrimidine</name>
        <dbReference type="ChEBI" id="CHEBI:57841"/>
    </ligand>
</feature>
<feature type="binding site" evidence="1">
    <location>
        <position position="77"/>
    </location>
    <ligand>
        <name>4-amino-2-methyl-5-(diphosphooxymethyl)pyrimidine</name>
        <dbReference type="ChEBI" id="CHEBI:57841"/>
    </ligand>
</feature>
<feature type="binding site" evidence="1">
    <location>
        <position position="78"/>
    </location>
    <ligand>
        <name>Mg(2+)</name>
        <dbReference type="ChEBI" id="CHEBI:18420"/>
    </ligand>
</feature>
<feature type="binding site" evidence="1">
    <location>
        <position position="97"/>
    </location>
    <ligand>
        <name>Mg(2+)</name>
        <dbReference type="ChEBI" id="CHEBI:18420"/>
    </ligand>
</feature>
<feature type="binding site" evidence="1">
    <location>
        <position position="116"/>
    </location>
    <ligand>
        <name>4-amino-2-methyl-5-(diphosphooxymethyl)pyrimidine</name>
        <dbReference type="ChEBI" id="CHEBI:57841"/>
    </ligand>
</feature>
<feature type="binding site" evidence="1">
    <location>
        <begin position="143"/>
        <end position="145"/>
    </location>
    <ligand>
        <name>2-[(2R,5Z)-2-carboxy-4-methylthiazol-5(2H)-ylidene]ethyl phosphate</name>
        <dbReference type="ChEBI" id="CHEBI:62899"/>
    </ligand>
</feature>
<feature type="binding site" evidence="1">
    <location>
        <position position="146"/>
    </location>
    <ligand>
        <name>4-amino-2-methyl-5-(diphosphooxymethyl)pyrimidine</name>
        <dbReference type="ChEBI" id="CHEBI:57841"/>
    </ligand>
</feature>
<feature type="binding site" evidence="1">
    <location>
        <position position="174"/>
    </location>
    <ligand>
        <name>2-[(2R,5Z)-2-carboxy-4-methylthiazol-5(2H)-ylidene]ethyl phosphate</name>
        <dbReference type="ChEBI" id="CHEBI:62899"/>
    </ligand>
</feature>
<feature type="binding site" evidence="1">
    <location>
        <begin position="194"/>
        <end position="195"/>
    </location>
    <ligand>
        <name>2-[(2R,5Z)-2-carboxy-4-methylthiazol-5(2H)-ylidene]ethyl phosphate</name>
        <dbReference type="ChEBI" id="CHEBI:62899"/>
    </ligand>
</feature>
<keyword id="KW-0460">Magnesium</keyword>
<keyword id="KW-0479">Metal-binding</keyword>
<keyword id="KW-1185">Reference proteome</keyword>
<keyword id="KW-0784">Thiamine biosynthesis</keyword>
<keyword id="KW-0808">Transferase</keyword>
<protein>
    <recommendedName>
        <fullName evidence="1">Thiamine-phosphate synthase</fullName>
        <shortName evidence="1">TP synthase</shortName>
        <shortName evidence="1">TPS</shortName>
        <ecNumber evidence="1">2.5.1.3</ecNumber>
    </recommendedName>
    <alternativeName>
        <fullName evidence="1">Thiamine-phosphate pyrophosphorylase</fullName>
        <shortName evidence="1">TMP pyrophosphorylase</shortName>
        <shortName evidence="1">TMP-PPase</shortName>
    </alternativeName>
</protein>
<comment type="function">
    <text evidence="1">Condenses 4-methyl-5-(beta-hydroxyethyl)thiazole monophosphate (THZ-P) and 2-methyl-4-amino-5-hydroxymethyl pyrimidine pyrophosphate (HMP-PP) to form thiamine monophosphate (TMP).</text>
</comment>
<comment type="catalytic activity">
    <reaction evidence="1">
        <text>2-[(2R,5Z)-2-carboxy-4-methylthiazol-5(2H)-ylidene]ethyl phosphate + 4-amino-2-methyl-5-(diphosphooxymethyl)pyrimidine + 2 H(+) = thiamine phosphate + CO2 + diphosphate</text>
        <dbReference type="Rhea" id="RHEA:47844"/>
        <dbReference type="ChEBI" id="CHEBI:15378"/>
        <dbReference type="ChEBI" id="CHEBI:16526"/>
        <dbReference type="ChEBI" id="CHEBI:33019"/>
        <dbReference type="ChEBI" id="CHEBI:37575"/>
        <dbReference type="ChEBI" id="CHEBI:57841"/>
        <dbReference type="ChEBI" id="CHEBI:62899"/>
        <dbReference type="EC" id="2.5.1.3"/>
    </reaction>
</comment>
<comment type="catalytic activity">
    <reaction evidence="1">
        <text>2-(2-carboxy-4-methylthiazol-5-yl)ethyl phosphate + 4-amino-2-methyl-5-(diphosphooxymethyl)pyrimidine + 2 H(+) = thiamine phosphate + CO2 + diphosphate</text>
        <dbReference type="Rhea" id="RHEA:47848"/>
        <dbReference type="ChEBI" id="CHEBI:15378"/>
        <dbReference type="ChEBI" id="CHEBI:16526"/>
        <dbReference type="ChEBI" id="CHEBI:33019"/>
        <dbReference type="ChEBI" id="CHEBI:37575"/>
        <dbReference type="ChEBI" id="CHEBI:57841"/>
        <dbReference type="ChEBI" id="CHEBI:62890"/>
        <dbReference type="EC" id="2.5.1.3"/>
    </reaction>
</comment>
<comment type="catalytic activity">
    <reaction evidence="1">
        <text>4-methyl-5-(2-phosphooxyethyl)-thiazole + 4-amino-2-methyl-5-(diphosphooxymethyl)pyrimidine + H(+) = thiamine phosphate + diphosphate</text>
        <dbReference type="Rhea" id="RHEA:22328"/>
        <dbReference type="ChEBI" id="CHEBI:15378"/>
        <dbReference type="ChEBI" id="CHEBI:33019"/>
        <dbReference type="ChEBI" id="CHEBI:37575"/>
        <dbReference type="ChEBI" id="CHEBI:57841"/>
        <dbReference type="ChEBI" id="CHEBI:58296"/>
        <dbReference type="EC" id="2.5.1.3"/>
    </reaction>
</comment>
<comment type="cofactor">
    <cofactor evidence="1">
        <name>Mg(2+)</name>
        <dbReference type="ChEBI" id="CHEBI:18420"/>
    </cofactor>
    <text evidence="1">Binds 1 Mg(2+) ion per subunit.</text>
</comment>
<comment type="pathway">
    <text evidence="1">Cofactor biosynthesis; thiamine diphosphate biosynthesis; thiamine phosphate from 4-amino-2-methyl-5-diphosphomethylpyrimidine and 4-methyl-5-(2-phosphoethyl)-thiazole: step 1/1.</text>
</comment>
<comment type="similarity">
    <text evidence="1">Belongs to the thiamine-phosphate synthase family.</text>
</comment>
<gene>
    <name evidence="1" type="primary">thiE</name>
    <name type="ordered locus">LCA_0057</name>
</gene>
<reference key="1">
    <citation type="journal article" date="2005" name="Nat. Biotechnol.">
        <title>The complete genome sequence of the meat-borne lactic acid bacterium Lactobacillus sakei 23K.</title>
        <authorList>
            <person name="Chaillou S."/>
            <person name="Champomier-Verges M.-C."/>
            <person name="Cornet M."/>
            <person name="Crutz-Le Coq A.-M."/>
            <person name="Dudez A.-M."/>
            <person name="Martin V."/>
            <person name="Beaufils S."/>
            <person name="Darbon-Rongere E."/>
            <person name="Bossy R."/>
            <person name="Loux V."/>
            <person name="Zagorec M."/>
        </authorList>
    </citation>
    <scope>NUCLEOTIDE SEQUENCE [LARGE SCALE GENOMIC DNA]</scope>
    <source>
        <strain>23K</strain>
    </source>
</reference>
<organism>
    <name type="scientific">Latilactobacillus sakei subsp. sakei (strain 23K)</name>
    <name type="common">Lactobacillus sakei subsp. sakei</name>
    <dbReference type="NCBI Taxonomy" id="314315"/>
    <lineage>
        <taxon>Bacteria</taxon>
        <taxon>Bacillati</taxon>
        <taxon>Bacillota</taxon>
        <taxon>Bacilli</taxon>
        <taxon>Lactobacillales</taxon>
        <taxon>Lactobacillaceae</taxon>
        <taxon>Latilactobacillus</taxon>
    </lineage>
</organism>
<accession>Q38ZM1</accession>
<name>THIE_LATSS</name>
<sequence length="224" mass="24191">MTNIAQEILQTYLVAGTQDTGRENFLPILDQALQAGITCFQFRDKGPNSLPTDAMRSDYAKKAQALCRTYHVPFIIDDRLELALDLQADGLHVGQSDQPWPKIEVAKQHGLITGLSCHTAQEILSSHQQPALDYIGVGPIFPTNSKEDAKTPLGLAQLKAFTQLSQLPVVAIGGISLKNCQQVAETGVAGAAVISAITQAKNIPQAIQLLNQPWQSSEGNNHES</sequence>
<dbReference type="EC" id="2.5.1.3" evidence="1"/>
<dbReference type="EMBL" id="CR936503">
    <property type="protein sequence ID" value="CAI54356.1"/>
    <property type="molecule type" value="Genomic_DNA"/>
</dbReference>
<dbReference type="RefSeq" id="WP_011373771.1">
    <property type="nucleotide sequence ID" value="NC_007576.1"/>
</dbReference>
<dbReference type="SMR" id="Q38ZM1"/>
<dbReference type="STRING" id="314315.LCA_0057"/>
<dbReference type="KEGG" id="lsa:LCA_0057"/>
<dbReference type="eggNOG" id="COG0352">
    <property type="taxonomic scope" value="Bacteria"/>
</dbReference>
<dbReference type="HOGENOM" id="CLU_018272_3_2_9"/>
<dbReference type="OrthoDB" id="9812206at2"/>
<dbReference type="UniPathway" id="UPA00060">
    <property type="reaction ID" value="UER00141"/>
</dbReference>
<dbReference type="Proteomes" id="UP000002707">
    <property type="component" value="Chromosome"/>
</dbReference>
<dbReference type="GO" id="GO:0005737">
    <property type="term" value="C:cytoplasm"/>
    <property type="evidence" value="ECO:0007669"/>
    <property type="project" value="TreeGrafter"/>
</dbReference>
<dbReference type="GO" id="GO:0000287">
    <property type="term" value="F:magnesium ion binding"/>
    <property type="evidence" value="ECO:0007669"/>
    <property type="project" value="UniProtKB-UniRule"/>
</dbReference>
<dbReference type="GO" id="GO:0004789">
    <property type="term" value="F:thiamine-phosphate diphosphorylase activity"/>
    <property type="evidence" value="ECO:0007669"/>
    <property type="project" value="UniProtKB-UniRule"/>
</dbReference>
<dbReference type="GO" id="GO:0009228">
    <property type="term" value="P:thiamine biosynthetic process"/>
    <property type="evidence" value="ECO:0007669"/>
    <property type="project" value="UniProtKB-KW"/>
</dbReference>
<dbReference type="GO" id="GO:0009229">
    <property type="term" value="P:thiamine diphosphate biosynthetic process"/>
    <property type="evidence" value="ECO:0007669"/>
    <property type="project" value="UniProtKB-UniRule"/>
</dbReference>
<dbReference type="CDD" id="cd00564">
    <property type="entry name" value="TMP_TenI"/>
    <property type="match status" value="1"/>
</dbReference>
<dbReference type="FunFam" id="3.20.20.70:FF:000096">
    <property type="entry name" value="Thiamine-phosphate synthase"/>
    <property type="match status" value="1"/>
</dbReference>
<dbReference type="Gene3D" id="3.20.20.70">
    <property type="entry name" value="Aldolase class I"/>
    <property type="match status" value="1"/>
</dbReference>
<dbReference type="HAMAP" id="MF_00097">
    <property type="entry name" value="TMP_synthase"/>
    <property type="match status" value="1"/>
</dbReference>
<dbReference type="InterPro" id="IPR013785">
    <property type="entry name" value="Aldolase_TIM"/>
</dbReference>
<dbReference type="InterPro" id="IPR036206">
    <property type="entry name" value="ThiamineP_synth_sf"/>
</dbReference>
<dbReference type="InterPro" id="IPR022998">
    <property type="entry name" value="ThiamineP_synth_TenI"/>
</dbReference>
<dbReference type="InterPro" id="IPR034291">
    <property type="entry name" value="TMP_synthase"/>
</dbReference>
<dbReference type="NCBIfam" id="TIGR00693">
    <property type="entry name" value="thiE"/>
    <property type="match status" value="1"/>
</dbReference>
<dbReference type="PANTHER" id="PTHR20857">
    <property type="entry name" value="THIAMINE-PHOSPHATE PYROPHOSPHORYLASE"/>
    <property type="match status" value="1"/>
</dbReference>
<dbReference type="PANTHER" id="PTHR20857:SF15">
    <property type="entry name" value="THIAMINE-PHOSPHATE SYNTHASE"/>
    <property type="match status" value="1"/>
</dbReference>
<dbReference type="Pfam" id="PF02581">
    <property type="entry name" value="TMP-TENI"/>
    <property type="match status" value="1"/>
</dbReference>
<dbReference type="SUPFAM" id="SSF51391">
    <property type="entry name" value="Thiamin phosphate synthase"/>
    <property type="match status" value="1"/>
</dbReference>
<evidence type="ECO:0000255" key="1">
    <source>
        <dbReference type="HAMAP-Rule" id="MF_00097"/>
    </source>
</evidence>